<proteinExistence type="evidence at transcript level"/>
<reference key="1">
    <citation type="journal article" date="2005" name="Nature">
        <title>Genome sequencing and analysis of Aspergillus oryzae.</title>
        <authorList>
            <person name="Machida M."/>
            <person name="Asai K."/>
            <person name="Sano M."/>
            <person name="Tanaka T."/>
            <person name="Kumagai T."/>
            <person name="Terai G."/>
            <person name="Kusumoto K."/>
            <person name="Arima T."/>
            <person name="Akita O."/>
            <person name="Kashiwagi Y."/>
            <person name="Abe K."/>
            <person name="Gomi K."/>
            <person name="Horiuchi H."/>
            <person name="Kitamoto K."/>
            <person name="Kobayashi T."/>
            <person name="Takeuchi M."/>
            <person name="Denning D.W."/>
            <person name="Galagan J.E."/>
            <person name="Nierman W.C."/>
            <person name="Yu J."/>
            <person name="Archer D.B."/>
            <person name="Bennett J.W."/>
            <person name="Bhatnagar D."/>
            <person name="Cleveland T.E."/>
            <person name="Fedorova N.D."/>
            <person name="Gotoh O."/>
            <person name="Horikawa H."/>
            <person name="Hosoyama A."/>
            <person name="Ichinomiya M."/>
            <person name="Igarashi R."/>
            <person name="Iwashita K."/>
            <person name="Juvvadi P.R."/>
            <person name="Kato M."/>
            <person name="Kato Y."/>
            <person name="Kin T."/>
            <person name="Kokubun A."/>
            <person name="Maeda H."/>
            <person name="Maeyama N."/>
            <person name="Maruyama J."/>
            <person name="Nagasaki H."/>
            <person name="Nakajima T."/>
            <person name="Oda K."/>
            <person name="Okada K."/>
            <person name="Paulsen I."/>
            <person name="Sakamoto K."/>
            <person name="Sawano T."/>
            <person name="Takahashi M."/>
            <person name="Takase K."/>
            <person name="Terabayashi Y."/>
            <person name="Wortman J.R."/>
            <person name="Yamada O."/>
            <person name="Yamagata Y."/>
            <person name="Anazawa H."/>
            <person name="Hata Y."/>
            <person name="Koide Y."/>
            <person name="Komori T."/>
            <person name="Koyama Y."/>
            <person name="Minetoki T."/>
            <person name="Suharnan S."/>
            <person name="Tanaka A."/>
            <person name="Isono K."/>
            <person name="Kuhara S."/>
            <person name="Ogasawara N."/>
            <person name="Kikuchi H."/>
        </authorList>
    </citation>
    <scope>NUCLEOTIDE SEQUENCE [LARGE SCALE GENOMIC DNA]</scope>
    <source>
        <strain>ATCC 42149 / RIB 40</strain>
    </source>
</reference>
<reference key="2">
    <citation type="journal article" date="2022" name="Mol. Biol. Rep.">
        <title>Overexpression of a novel gene Aokap2 affects the growth and kojic acid production in Aspergillus oryzae.</title>
        <authorList>
            <person name="Li Y."/>
            <person name="Zhang H."/>
            <person name="Chen Z."/>
            <person name="Fan J."/>
            <person name="Chen T."/>
            <person name="Xiao Y."/>
            <person name="Jie J."/>
            <person name="Zeng B."/>
            <person name="Zhang Z."/>
        </authorList>
    </citation>
    <scope>INDUCTION</scope>
    <scope>FUNCTION</scope>
</reference>
<accession>Q2U6T7</accession>
<comment type="function">
    <text evidence="5">Probable cell surface ferric reductase that acts as a negative regulatory factor of growth and development (PubMed:35034288). Involved in kojic acid production through the regulation of kojA expression (PubMed:35034288).</text>
</comment>
<comment type="catalytic activity">
    <reaction evidence="1">
        <text>2 a Fe(II)-siderophore + NADP(+) + H(+) = 2 a Fe(III)-siderophore + NADPH</text>
        <dbReference type="Rhea" id="RHEA:28795"/>
        <dbReference type="Rhea" id="RHEA-COMP:11342"/>
        <dbReference type="Rhea" id="RHEA-COMP:11344"/>
        <dbReference type="ChEBI" id="CHEBI:15378"/>
        <dbReference type="ChEBI" id="CHEBI:29033"/>
        <dbReference type="ChEBI" id="CHEBI:29034"/>
        <dbReference type="ChEBI" id="CHEBI:57783"/>
        <dbReference type="ChEBI" id="CHEBI:58349"/>
        <dbReference type="EC" id="1.16.1.9"/>
    </reaction>
</comment>
<comment type="cofactor">
    <cofactor evidence="1">
        <name>FAD</name>
        <dbReference type="ChEBI" id="CHEBI:57692"/>
    </cofactor>
</comment>
<comment type="cofactor">
    <cofactor evidence="1">
        <name>heme</name>
        <dbReference type="ChEBI" id="CHEBI:30413"/>
    </cofactor>
</comment>
<comment type="subcellular location">
    <subcellularLocation>
        <location evidence="1">Cell membrane</location>
        <topology evidence="2">Multi-pass membrane protein</topology>
    </subcellularLocation>
</comment>
<comment type="similarity">
    <text evidence="7">Belongs to the ferric reductase (FRE) family.</text>
</comment>
<name>KAP2_ASPOR</name>
<sequence>MLPGWHSIASLVKRIDIPIVASTTPAEIAEMQQDAWPEAGKYGLGWVYFSVILLAISTIIRFYHLWGDQIRIALHKEDMAGTSPYVTSPQEEYELPSAATDSSTTHFFPARGPLPSTNTTKQQSSISTIAPLNNTIAFVRWIFYRPIPVLRIGKLRIGFPSLGASSIILAALIFVTLYSFVPQPLYYSSISIGSPPLAIRAGMIAVAMIPWIIALSTRANFVSILTGISHERLNVLHRWAGYLCLFLSLIHMVPFYVTPIWESTNFMYYQQYFPRNIYIYGTGWAALVPLIVLCLHSLPILRAWMYELFKLVHLPLSIIFLAMIFWHSKNFLASWDYLWATVAIWMLSYAVRLFYVNWSNPLRLSFLIGEECAVTILPQNAIKVTVATQMKWKPGQFVYLRMPGISLFERHPFTISSLCSGDFPSEYGENYRDLALVFRPFGGFTRNVFLKTFEYGPYKTWTAFLEGPYGGMKRDMAAFDDVVFFAGGSGITATASHLLNLIKKMRDRKAVTRSVRVVWAFRSPETIDWFREELRICRDFAPPNTVHCHFFLTGLEPHGQDQLAQNQFYQEMLRDKMYNTLEGMDKRNSAYIREEAAGDPEIEKELRRENEDAITALPLAHTLPHINTSRHYTSPMDNNYQHAPYPAPHVSPADTPFNFGFPPSSTVFPKLTTRVGTVPLQRNGWRIDYARPNIPQVLKDYSRTFGRRTCVFVCGPPSMRVEVSKAVAQLQQVVMTDSSKDEIFLHAENYNV</sequence>
<protein>
    <recommendedName>
        <fullName evidence="6">Probable cell surface ferric reductase kap2</fullName>
        <ecNumber evidence="1">1.16.1.9</ecNumber>
    </recommendedName>
    <alternativeName>
        <fullName evidence="6">Kojic acid related protein 2</fullName>
    </alternativeName>
</protein>
<gene>
    <name evidence="6" type="primary">kap2</name>
    <name type="ORF">AO090120000102</name>
</gene>
<feature type="chain" id="PRO_0000458980" description="Probable cell surface ferric reductase kap2">
    <location>
        <begin position="1"/>
        <end position="752"/>
    </location>
</feature>
<feature type="transmembrane region" description="Helical" evidence="2">
    <location>
        <begin position="40"/>
        <end position="60"/>
    </location>
</feature>
<feature type="transmembrane region" description="Helical" evidence="2">
    <location>
        <begin position="157"/>
        <end position="177"/>
    </location>
</feature>
<feature type="transmembrane region" description="Helical" evidence="2">
    <location>
        <begin position="195"/>
        <end position="215"/>
    </location>
</feature>
<feature type="transmembrane region" description="Helical" evidence="2">
    <location>
        <begin position="241"/>
        <end position="261"/>
    </location>
</feature>
<feature type="transmembrane region" description="Helical" evidence="2">
    <location>
        <begin position="281"/>
        <end position="301"/>
    </location>
</feature>
<feature type="transmembrane region" description="Helical" evidence="2">
    <location>
        <begin position="306"/>
        <end position="326"/>
    </location>
</feature>
<feature type="transmembrane region" description="Helical" evidence="2">
    <location>
        <begin position="331"/>
        <end position="351"/>
    </location>
</feature>
<feature type="transmembrane region" description="Helical" evidence="2">
    <location>
        <begin position="482"/>
        <end position="502"/>
    </location>
</feature>
<feature type="domain" description="Ferric oxidoreductase" evidence="2">
    <location>
        <begin position="201"/>
        <end position="348"/>
    </location>
</feature>
<feature type="domain" description="FAD-binding FR-type" evidence="4">
    <location>
        <begin position="349"/>
        <end position="475"/>
    </location>
</feature>
<feature type="binding site" description="axial binding residue" evidence="1">
    <location>
        <position position="237"/>
    </location>
    <ligand>
        <name>heme</name>
        <dbReference type="ChEBI" id="CHEBI:30413"/>
        <label>1</label>
    </ligand>
    <ligandPart>
        <name>Fe</name>
        <dbReference type="ChEBI" id="CHEBI:18248"/>
    </ligandPart>
</feature>
<feature type="binding site" description="axial binding residue" evidence="1">
    <location>
        <position position="251"/>
    </location>
    <ligand>
        <name>heme</name>
        <dbReference type="ChEBI" id="CHEBI:30413"/>
        <label>2</label>
    </ligand>
    <ligandPart>
        <name>Fe</name>
        <dbReference type="ChEBI" id="CHEBI:18248"/>
    </ligandPart>
</feature>
<feature type="binding site" description="axial binding residue" evidence="1">
    <location>
        <position position="313"/>
    </location>
    <ligand>
        <name>heme</name>
        <dbReference type="ChEBI" id="CHEBI:30413"/>
        <label>1</label>
    </ligand>
    <ligandPart>
        <name>Fe</name>
        <dbReference type="ChEBI" id="CHEBI:18248"/>
    </ligandPart>
</feature>
<feature type="binding site" description="axial binding residue" evidence="1">
    <location>
        <position position="327"/>
    </location>
    <ligand>
        <name>heme</name>
        <dbReference type="ChEBI" id="CHEBI:30413"/>
        <label>2</label>
    </ligand>
    <ligandPart>
        <name>Fe</name>
        <dbReference type="ChEBI" id="CHEBI:18248"/>
    </ligandPart>
</feature>
<feature type="binding site" evidence="2">
    <location>
        <begin position="467"/>
        <end position="470"/>
    </location>
    <ligand>
        <name>NADP(+)</name>
        <dbReference type="ChEBI" id="CHEBI:58349"/>
    </ligand>
</feature>
<feature type="binding site" evidence="2">
    <location>
        <begin position="714"/>
        <end position="715"/>
    </location>
    <ligand>
        <name>NADP(+)</name>
        <dbReference type="ChEBI" id="CHEBI:58349"/>
    </ligand>
</feature>
<feature type="glycosylation site" description="N-linked (GlcNAc...) asparagine" evidence="3">
    <location>
        <position position="118"/>
    </location>
</feature>
<feature type="glycosylation site" description="N-linked (GlcNAc...) asparagine" evidence="3">
    <location>
        <position position="133"/>
    </location>
</feature>
<feature type="glycosylation site" description="N-linked (GlcNAc...) asparagine" evidence="3">
    <location>
        <position position="357"/>
    </location>
</feature>
<feature type="glycosylation site" description="N-linked (GlcNAc...) asparagine" evidence="3">
    <location>
        <position position="627"/>
    </location>
</feature>
<keyword id="KW-1003">Cell membrane</keyword>
<keyword id="KW-0249">Electron transport</keyword>
<keyword id="KW-0325">Glycoprotein</keyword>
<keyword id="KW-0406">Ion transport</keyword>
<keyword id="KW-0408">Iron</keyword>
<keyword id="KW-0472">Membrane</keyword>
<keyword id="KW-0479">Metal-binding</keyword>
<keyword id="KW-0521">NADP</keyword>
<keyword id="KW-0560">Oxidoreductase</keyword>
<keyword id="KW-1185">Reference proteome</keyword>
<keyword id="KW-0812">Transmembrane</keyword>
<keyword id="KW-1133">Transmembrane helix</keyword>
<keyword id="KW-0813">Transport</keyword>
<dbReference type="EC" id="1.16.1.9" evidence="1"/>
<dbReference type="EMBL" id="BA000053">
    <property type="protein sequence ID" value="BAE62728.1"/>
    <property type="molecule type" value="Genomic_DNA"/>
</dbReference>
<dbReference type="RefSeq" id="XP_001823861.1">
    <property type="nucleotide sequence ID" value="XM_001823809.1"/>
</dbReference>
<dbReference type="EnsemblFungi" id="BAE62728">
    <property type="protein sequence ID" value="BAE62728"/>
    <property type="gene ID" value="AO090120000102"/>
</dbReference>
<dbReference type="GeneID" id="5996120"/>
<dbReference type="KEGG" id="aor:AO090120000102"/>
<dbReference type="VEuPathDB" id="FungiDB:AO090120000102"/>
<dbReference type="HOGENOM" id="CLU_010365_7_1_1"/>
<dbReference type="OMA" id="RWAGYLC"/>
<dbReference type="OrthoDB" id="59397at5052"/>
<dbReference type="Proteomes" id="UP000006564">
    <property type="component" value="Chromosome 5"/>
</dbReference>
<dbReference type="GO" id="GO:0005886">
    <property type="term" value="C:plasma membrane"/>
    <property type="evidence" value="ECO:0007669"/>
    <property type="project" value="UniProtKB-SubCell"/>
</dbReference>
<dbReference type="GO" id="GO:0000293">
    <property type="term" value="F:ferric-chelate reductase activity"/>
    <property type="evidence" value="ECO:0007669"/>
    <property type="project" value="UniProtKB-ARBA"/>
</dbReference>
<dbReference type="GO" id="GO:0046872">
    <property type="term" value="F:metal ion binding"/>
    <property type="evidence" value="ECO:0007669"/>
    <property type="project" value="UniProtKB-KW"/>
</dbReference>
<dbReference type="GO" id="GO:0015677">
    <property type="term" value="P:copper ion import"/>
    <property type="evidence" value="ECO:0007669"/>
    <property type="project" value="TreeGrafter"/>
</dbReference>
<dbReference type="GO" id="GO:0006879">
    <property type="term" value="P:intracellular iron ion homeostasis"/>
    <property type="evidence" value="ECO:0007669"/>
    <property type="project" value="TreeGrafter"/>
</dbReference>
<dbReference type="GO" id="GO:0006826">
    <property type="term" value="P:iron ion transport"/>
    <property type="evidence" value="ECO:0007669"/>
    <property type="project" value="TreeGrafter"/>
</dbReference>
<dbReference type="CDD" id="cd06186">
    <property type="entry name" value="NOX_Duox_like_FAD_NADP"/>
    <property type="match status" value="1"/>
</dbReference>
<dbReference type="FunFam" id="3.40.50.80:FF:000061">
    <property type="entry name" value="Metalloreductase transmembrane component, putative"/>
    <property type="match status" value="1"/>
</dbReference>
<dbReference type="Gene3D" id="3.40.50.80">
    <property type="entry name" value="Nucleotide-binding domain of ferredoxin-NADP reductase (FNR) module"/>
    <property type="match status" value="1"/>
</dbReference>
<dbReference type="InterPro" id="IPR013112">
    <property type="entry name" value="FAD-bd_8"/>
</dbReference>
<dbReference type="InterPro" id="IPR017927">
    <property type="entry name" value="FAD-bd_FR_type"/>
</dbReference>
<dbReference type="InterPro" id="IPR013130">
    <property type="entry name" value="Fe3_Rdtase_TM_dom"/>
</dbReference>
<dbReference type="InterPro" id="IPR013121">
    <property type="entry name" value="Fe_red_NAD-bd_6"/>
</dbReference>
<dbReference type="InterPro" id="IPR051410">
    <property type="entry name" value="Ferric/Cupric_Reductase"/>
</dbReference>
<dbReference type="InterPro" id="IPR039261">
    <property type="entry name" value="FNR_nucleotide-bd"/>
</dbReference>
<dbReference type="InterPro" id="IPR017938">
    <property type="entry name" value="Riboflavin_synthase-like_b-brl"/>
</dbReference>
<dbReference type="PANTHER" id="PTHR32361:SF23">
    <property type="entry name" value="FERRIC-CHELATE REDUCTASE"/>
    <property type="match status" value="1"/>
</dbReference>
<dbReference type="PANTHER" id="PTHR32361">
    <property type="entry name" value="FERRIC/CUPRIC REDUCTASE TRANSMEMBRANE COMPONENT"/>
    <property type="match status" value="1"/>
</dbReference>
<dbReference type="Pfam" id="PF08022">
    <property type="entry name" value="FAD_binding_8"/>
    <property type="match status" value="1"/>
</dbReference>
<dbReference type="Pfam" id="PF01794">
    <property type="entry name" value="Ferric_reduct"/>
    <property type="match status" value="1"/>
</dbReference>
<dbReference type="Pfam" id="PF08030">
    <property type="entry name" value="NAD_binding_6"/>
    <property type="match status" value="1"/>
</dbReference>
<dbReference type="SFLD" id="SFLDS00052">
    <property type="entry name" value="Ferric_Reductase_Domain"/>
    <property type="match status" value="1"/>
</dbReference>
<dbReference type="SFLD" id="SFLDG01168">
    <property type="entry name" value="Ferric_reductase_subgroup_(FRE"/>
    <property type="match status" value="1"/>
</dbReference>
<dbReference type="SUPFAM" id="SSF52343">
    <property type="entry name" value="Ferredoxin reductase-like, C-terminal NADP-linked domain"/>
    <property type="match status" value="1"/>
</dbReference>
<dbReference type="SUPFAM" id="SSF63380">
    <property type="entry name" value="Riboflavin synthase domain-like"/>
    <property type="match status" value="1"/>
</dbReference>
<dbReference type="PROSITE" id="PS51384">
    <property type="entry name" value="FAD_FR"/>
    <property type="match status" value="1"/>
</dbReference>
<evidence type="ECO:0000250" key="1">
    <source>
        <dbReference type="UniProtKB" id="P32791"/>
    </source>
</evidence>
<evidence type="ECO:0000255" key="2"/>
<evidence type="ECO:0000255" key="3">
    <source>
        <dbReference type="PROSITE-ProRule" id="PRU00498"/>
    </source>
</evidence>
<evidence type="ECO:0000255" key="4">
    <source>
        <dbReference type="PROSITE-ProRule" id="PRU00716"/>
    </source>
</evidence>
<evidence type="ECO:0000269" key="5">
    <source>
    </source>
</evidence>
<evidence type="ECO:0000303" key="6">
    <source>
    </source>
</evidence>
<evidence type="ECO:0000305" key="7"/>
<organism>
    <name type="scientific">Aspergillus oryzae (strain ATCC 42149 / RIB 40)</name>
    <name type="common">Yellow koji mold</name>
    <dbReference type="NCBI Taxonomy" id="510516"/>
    <lineage>
        <taxon>Eukaryota</taxon>
        <taxon>Fungi</taxon>
        <taxon>Dikarya</taxon>
        <taxon>Ascomycota</taxon>
        <taxon>Pezizomycotina</taxon>
        <taxon>Eurotiomycetes</taxon>
        <taxon>Eurotiomycetidae</taxon>
        <taxon>Eurotiales</taxon>
        <taxon>Aspergillaceae</taxon>
        <taxon>Aspergillus</taxon>
        <taxon>Aspergillus subgen. Circumdati</taxon>
    </lineage>
</organism>